<accession>Q46LK1</accession>
<gene>
    <name evidence="1" type="primary">psb28</name>
    <name type="ordered locus">PMN2A_0135</name>
</gene>
<dbReference type="EMBL" id="CP000095">
    <property type="protein sequence ID" value="AAZ57627.1"/>
    <property type="molecule type" value="Genomic_DNA"/>
</dbReference>
<dbReference type="RefSeq" id="WP_011293669.1">
    <property type="nucleotide sequence ID" value="NC_007335.2"/>
</dbReference>
<dbReference type="SMR" id="Q46LK1"/>
<dbReference type="STRING" id="59920.PMN2A_0135"/>
<dbReference type="KEGG" id="pmn:PMN2A_0135"/>
<dbReference type="HOGENOM" id="CLU_137323_1_0_3"/>
<dbReference type="OrthoDB" id="559598at2"/>
<dbReference type="PhylomeDB" id="Q46LK1"/>
<dbReference type="Proteomes" id="UP000002535">
    <property type="component" value="Chromosome"/>
</dbReference>
<dbReference type="GO" id="GO:0009654">
    <property type="term" value="C:photosystem II oxygen evolving complex"/>
    <property type="evidence" value="ECO:0007669"/>
    <property type="project" value="InterPro"/>
</dbReference>
<dbReference type="GO" id="GO:0031676">
    <property type="term" value="C:plasma membrane-derived thylakoid membrane"/>
    <property type="evidence" value="ECO:0007669"/>
    <property type="project" value="UniProtKB-SubCell"/>
</dbReference>
<dbReference type="GO" id="GO:0015979">
    <property type="term" value="P:photosynthesis"/>
    <property type="evidence" value="ECO:0007669"/>
    <property type="project" value="UniProtKB-UniRule"/>
</dbReference>
<dbReference type="Gene3D" id="2.40.30.220">
    <property type="entry name" value="Photosystem II Psb28"/>
    <property type="match status" value="1"/>
</dbReference>
<dbReference type="HAMAP" id="MF_01370">
    <property type="entry name" value="PSII_Psb28"/>
    <property type="match status" value="1"/>
</dbReference>
<dbReference type="InterPro" id="IPR038676">
    <property type="entry name" value="Psb28_c1_sf"/>
</dbReference>
<dbReference type="InterPro" id="IPR005610">
    <property type="entry name" value="PSII_Psb28_class-1"/>
</dbReference>
<dbReference type="NCBIfam" id="TIGR03047">
    <property type="entry name" value="PS_II_psb28"/>
    <property type="match status" value="1"/>
</dbReference>
<dbReference type="PANTHER" id="PTHR34963">
    <property type="match status" value="1"/>
</dbReference>
<dbReference type="PANTHER" id="PTHR34963:SF2">
    <property type="entry name" value="PHOTOSYSTEM II REACTION CENTER PSB28 PROTEIN, CHLOROPLASTIC"/>
    <property type="match status" value="1"/>
</dbReference>
<dbReference type="Pfam" id="PF03912">
    <property type="entry name" value="Psb28"/>
    <property type="match status" value="1"/>
</dbReference>
<evidence type="ECO:0000255" key="1">
    <source>
        <dbReference type="HAMAP-Rule" id="MF_01370"/>
    </source>
</evidence>
<proteinExistence type="inferred from homology"/>
<organism>
    <name type="scientific">Prochlorococcus marinus (strain NATL2A)</name>
    <dbReference type="NCBI Taxonomy" id="59920"/>
    <lineage>
        <taxon>Bacteria</taxon>
        <taxon>Bacillati</taxon>
        <taxon>Cyanobacteriota</taxon>
        <taxon>Cyanophyceae</taxon>
        <taxon>Synechococcales</taxon>
        <taxon>Prochlorococcaceae</taxon>
        <taxon>Prochlorococcus</taxon>
    </lineage>
</organism>
<name>PSB28_PROMT</name>
<feature type="chain" id="PRO_0000271566" description="Photosystem II reaction center Psb28 protein">
    <location>
        <begin position="1"/>
        <end position="113"/>
    </location>
</feature>
<comment type="subunit">
    <text evidence="1">Part of the photosystem II complex.</text>
</comment>
<comment type="subcellular location">
    <subcellularLocation>
        <location evidence="1">Cellular thylakoid membrane</location>
        <topology evidence="1">Peripheral membrane protein</topology>
        <orientation evidence="1">Cytoplasmic side</orientation>
    </subcellularLocation>
</comment>
<comment type="similarity">
    <text evidence="1">Belongs to the Psb28 family.</text>
</comment>
<protein>
    <recommendedName>
        <fullName evidence="1">Photosystem II reaction center Psb28 protein</fullName>
    </recommendedName>
    <alternativeName>
        <fullName evidence="1">Photosystem II 13 kDa protein</fullName>
    </alternativeName>
    <alternativeName>
        <fullName evidence="1">Photosystem II reaction center W protein</fullName>
    </alternativeName>
</protein>
<keyword id="KW-0472">Membrane</keyword>
<keyword id="KW-0602">Photosynthesis</keyword>
<keyword id="KW-0604">Photosystem II</keyword>
<keyword id="KW-1185">Reference proteome</keyword>
<keyword id="KW-0793">Thylakoid</keyword>
<sequence>MTKINENVAIQFVKGENEKDQPEIRLFRNLDGKKGKAVYKFYKPKTITLTNYKSVQRMFLIDSEGVLSTKKIDLSISEDHVKEVKSTYNWNSEEEFERFMRFASRYANSLSQN</sequence>
<reference key="1">
    <citation type="journal article" date="2007" name="PLoS Genet.">
        <title>Patterns and implications of gene gain and loss in the evolution of Prochlorococcus.</title>
        <authorList>
            <person name="Kettler G.C."/>
            <person name="Martiny A.C."/>
            <person name="Huang K."/>
            <person name="Zucker J."/>
            <person name="Coleman M.L."/>
            <person name="Rodrigue S."/>
            <person name="Chen F."/>
            <person name="Lapidus A."/>
            <person name="Ferriera S."/>
            <person name="Johnson J."/>
            <person name="Steglich C."/>
            <person name="Church G.M."/>
            <person name="Richardson P."/>
            <person name="Chisholm S.W."/>
        </authorList>
    </citation>
    <scope>NUCLEOTIDE SEQUENCE [LARGE SCALE GENOMIC DNA]</scope>
    <source>
        <strain>NATL2A</strain>
    </source>
</reference>